<protein>
    <recommendedName>
        <fullName>SMH class II histocompatibility antigen, beta-1 chain</fullName>
    </recommendedName>
</protein>
<name>HB21_SPAEH</name>
<evidence type="ECO:0000255" key="1"/>
<evidence type="ECO:0000255" key="2">
    <source>
        <dbReference type="PROSITE-ProRule" id="PRU00114"/>
    </source>
</evidence>
<evidence type="ECO:0000305" key="3"/>
<comment type="subcellular location">
    <subcellularLocation>
        <location evidence="3">Membrane</location>
        <topology evidence="3">Single-pass type I membrane protein</topology>
    </subcellularLocation>
</comment>
<comment type="similarity">
    <text evidence="3">Belongs to the MHC class II family.</text>
</comment>
<proteinExistence type="inferred from homology"/>
<accession>P15464</accession>
<organism>
    <name type="scientific">Spalax ehrenbergi</name>
    <name type="common">Middle East blind mole rat</name>
    <name type="synonym">Nannospalax ehrenbergi</name>
    <dbReference type="NCBI Taxonomy" id="30637"/>
    <lineage>
        <taxon>Eukaryota</taxon>
        <taxon>Metazoa</taxon>
        <taxon>Chordata</taxon>
        <taxon>Craniata</taxon>
        <taxon>Vertebrata</taxon>
        <taxon>Euteleostomi</taxon>
        <taxon>Mammalia</taxon>
        <taxon>Eutheria</taxon>
        <taxon>Euarchontoglires</taxon>
        <taxon>Glires</taxon>
        <taxon>Rodentia</taxon>
        <taxon>Myomorpha</taxon>
        <taxon>Muroidea</taxon>
        <taxon>Spalacidae</taxon>
        <taxon>Spalacinae</taxon>
        <taxon>Nannospalax</taxon>
    </lineage>
</organism>
<reference key="1">
    <citation type="journal article" date="1987" name="Mol. Biol. Evol.">
        <title>Evolutionary diversification of class II P loci in the Mhc of the mole-rat Spalax ehrenbergi.</title>
        <authorList>
            <person name="Schopfer R."/>
            <person name="Figueroa F."/>
            <person name="Nizetic D."/>
            <person name="Nevo E."/>
            <person name="Klein J."/>
        </authorList>
    </citation>
    <scope>NUCLEOTIDE SEQUENCE [GENOMIC DNA]</scope>
</reference>
<dbReference type="EMBL" id="M16685">
    <property type="protein sequence ID" value="AAA42354.1"/>
    <property type="molecule type" value="Genomic_DNA"/>
</dbReference>
<dbReference type="EMBL" id="M16683">
    <property type="protein sequence ID" value="AAA42354.1"/>
    <property type="status" value="JOINED"/>
    <property type="molecule type" value="Genomic_DNA"/>
</dbReference>
<dbReference type="EMBL" id="M16684">
    <property type="protein sequence ID" value="AAA42354.1"/>
    <property type="status" value="JOINED"/>
    <property type="molecule type" value="Genomic_DNA"/>
</dbReference>
<dbReference type="PIR" id="A29088">
    <property type="entry name" value="A29088"/>
</dbReference>
<dbReference type="SMR" id="P15464"/>
<dbReference type="GO" id="GO:0042613">
    <property type="term" value="C:MHC class II protein complex"/>
    <property type="evidence" value="ECO:0007669"/>
    <property type="project" value="UniProtKB-KW"/>
</dbReference>
<dbReference type="GO" id="GO:0002250">
    <property type="term" value="P:adaptive immune response"/>
    <property type="evidence" value="ECO:0007669"/>
    <property type="project" value="UniProtKB-KW"/>
</dbReference>
<dbReference type="GO" id="GO:0002504">
    <property type="term" value="P:antigen processing and presentation of peptide or polysaccharide antigen via MHC class II"/>
    <property type="evidence" value="ECO:0007669"/>
    <property type="project" value="UniProtKB-KW"/>
</dbReference>
<dbReference type="CDD" id="cd21003">
    <property type="entry name" value="IgC1_MHC_II_beta_HLA-DP"/>
    <property type="match status" value="1"/>
</dbReference>
<dbReference type="FunFam" id="2.60.40.10:FF:000116">
    <property type="entry name" value="HLA class II histocompatibility antigen, DRB1-1 beta chain"/>
    <property type="match status" value="1"/>
</dbReference>
<dbReference type="FunFam" id="3.10.320.10:FF:000001">
    <property type="entry name" value="HLA class II histocompatibility antigen, DRB1-1 beta chain"/>
    <property type="match status" value="1"/>
</dbReference>
<dbReference type="Gene3D" id="3.10.320.10">
    <property type="entry name" value="Class II Histocompatibility Antigen, M Beta Chain, Chain B, domain 1"/>
    <property type="match status" value="1"/>
</dbReference>
<dbReference type="Gene3D" id="2.60.40.10">
    <property type="entry name" value="Immunoglobulins"/>
    <property type="match status" value="1"/>
</dbReference>
<dbReference type="InterPro" id="IPR007110">
    <property type="entry name" value="Ig-like_dom"/>
</dbReference>
<dbReference type="InterPro" id="IPR036179">
    <property type="entry name" value="Ig-like_dom_sf"/>
</dbReference>
<dbReference type="InterPro" id="IPR013783">
    <property type="entry name" value="Ig-like_fold"/>
</dbReference>
<dbReference type="InterPro" id="IPR003006">
    <property type="entry name" value="Ig/MHC_CS"/>
</dbReference>
<dbReference type="InterPro" id="IPR003597">
    <property type="entry name" value="Ig_C1-set"/>
</dbReference>
<dbReference type="InterPro" id="IPR050160">
    <property type="entry name" value="MHC/Immunoglobulin"/>
</dbReference>
<dbReference type="InterPro" id="IPR011162">
    <property type="entry name" value="MHC_I/II-like_Ag-recog"/>
</dbReference>
<dbReference type="InterPro" id="IPR014745">
    <property type="entry name" value="MHC_II_a/b_N"/>
</dbReference>
<dbReference type="InterPro" id="IPR000353">
    <property type="entry name" value="MHC_II_b_N"/>
</dbReference>
<dbReference type="PANTHER" id="PTHR19944:SF46">
    <property type="entry name" value="HLA CLASS II HISTOCOMPATIBILITY ANTIGEN, DP BETA 1 CHAIN"/>
    <property type="match status" value="1"/>
</dbReference>
<dbReference type="PANTHER" id="PTHR19944">
    <property type="entry name" value="MHC CLASS II-RELATED"/>
    <property type="match status" value="1"/>
</dbReference>
<dbReference type="Pfam" id="PF07654">
    <property type="entry name" value="C1-set"/>
    <property type="match status" value="1"/>
</dbReference>
<dbReference type="Pfam" id="PF00969">
    <property type="entry name" value="MHC_II_beta"/>
    <property type="match status" value="1"/>
</dbReference>
<dbReference type="SMART" id="SM00407">
    <property type="entry name" value="IGc1"/>
    <property type="match status" value="1"/>
</dbReference>
<dbReference type="SMART" id="SM00921">
    <property type="entry name" value="MHC_II_beta"/>
    <property type="match status" value="1"/>
</dbReference>
<dbReference type="SUPFAM" id="SSF48726">
    <property type="entry name" value="Immunoglobulin"/>
    <property type="match status" value="1"/>
</dbReference>
<dbReference type="SUPFAM" id="SSF54452">
    <property type="entry name" value="MHC antigen-recognition domain"/>
    <property type="match status" value="1"/>
</dbReference>
<dbReference type="PROSITE" id="PS50835">
    <property type="entry name" value="IG_LIKE"/>
    <property type="match status" value="1"/>
</dbReference>
<dbReference type="PROSITE" id="PS00290">
    <property type="entry name" value="IG_MHC"/>
    <property type="match status" value="1"/>
</dbReference>
<feature type="signal peptide">
    <location>
        <begin position="1"/>
        <end position="29"/>
    </location>
</feature>
<feature type="chain" id="PRO_0000019007" description="SMH class II histocompatibility antigen, beta-1 chain">
    <location>
        <begin position="30"/>
        <end position="258"/>
    </location>
</feature>
<feature type="topological domain" description="Extracellular" evidence="1">
    <location>
        <begin position="30"/>
        <end position="225"/>
    </location>
</feature>
<feature type="transmembrane region" description="Helical" evidence="1">
    <location>
        <begin position="226"/>
        <end position="246"/>
    </location>
</feature>
<feature type="topological domain" description="Cytoplasmic" evidence="1">
    <location>
        <begin position="247"/>
        <end position="258"/>
    </location>
</feature>
<feature type="domain" description="Ig-like C1-type">
    <location>
        <begin position="124"/>
        <end position="212"/>
    </location>
</feature>
<feature type="region of interest" description="Beta-1">
    <location>
        <begin position="30"/>
        <end position="121"/>
    </location>
</feature>
<feature type="region of interest" description="Beta-2">
    <location>
        <begin position="122"/>
        <end position="215"/>
    </location>
</feature>
<feature type="region of interest" description="Connecting peptide">
    <location>
        <begin position="216"/>
        <end position="225"/>
    </location>
</feature>
<feature type="glycosylation site" description="N-linked (GlcNAc...) asparagine" evidence="1">
    <location>
        <position position="224"/>
    </location>
</feature>
<feature type="disulfide bond" evidence="2">
    <location>
        <begin position="44"/>
        <end position="106"/>
    </location>
</feature>
<feature type="disulfide bond" evidence="2">
    <location>
        <begin position="144"/>
        <end position="200"/>
    </location>
</feature>
<keyword id="KW-1064">Adaptive immunity</keyword>
<keyword id="KW-1015">Disulfide bond</keyword>
<keyword id="KW-0325">Glycoprotein</keyword>
<keyword id="KW-0391">Immunity</keyword>
<keyword id="KW-0472">Membrane</keyword>
<keyword id="KW-0491">MHC II</keyword>
<keyword id="KW-0732">Signal</keyword>
<keyword id="KW-0812">Transmembrane</keyword>
<keyword id="KW-1133">Transmembrane helix</keyword>
<sequence>MMVLPVPVAPWTAALTVLLMVLNKSVVQGRTTPENYLFRAWQECHLTHGRYRYVERYIYNQEEYVRFDSDVGVFRAVTELGRSWADDFNSRKEALEQKRAAPDTGCRHNHELNQRLSQSLIAQPKVHVSPSKGGTLNHHNLLVCQVTDFYPGNIQVRWFRNNQEETTGISTTNPIRNGDWTFQILVTLEMTPQRGDVYTCHVEHPSLDRPITVEWRAQSDSARNKTLTGVGGLVLGLIFLAVGLIMHVRSKKAQRGSR</sequence>